<evidence type="ECO:0000255" key="1">
    <source>
        <dbReference type="HAMAP-Rule" id="MF_00351"/>
    </source>
</evidence>
<protein>
    <recommendedName>
        <fullName evidence="1">Fibrillarin-like rRNA/tRNA 2'-O-methyltransferase</fullName>
        <ecNumber evidence="1">2.1.1.-</ecNumber>
    </recommendedName>
</protein>
<accession>A6UV22</accession>
<keyword id="KW-0489">Methyltransferase</keyword>
<keyword id="KW-0694">RNA-binding</keyword>
<keyword id="KW-0698">rRNA processing</keyword>
<keyword id="KW-0808">Transferase</keyword>
<keyword id="KW-0819">tRNA processing</keyword>
<name>FLPA_META3</name>
<feature type="chain" id="PRO_1000006937" description="Fibrillarin-like rRNA/tRNA 2'-O-methyltransferase">
    <location>
        <begin position="1"/>
        <end position="231"/>
    </location>
</feature>
<feature type="binding site" evidence="1">
    <location>
        <begin position="88"/>
        <end position="89"/>
    </location>
    <ligand>
        <name>S-adenosyl-L-methionine</name>
        <dbReference type="ChEBI" id="CHEBI:59789"/>
    </ligand>
</feature>
<feature type="binding site" evidence="1">
    <location>
        <begin position="106"/>
        <end position="107"/>
    </location>
    <ligand>
        <name>S-adenosyl-L-methionine</name>
        <dbReference type="ChEBI" id="CHEBI:59789"/>
    </ligand>
</feature>
<feature type="binding site" evidence="1">
    <location>
        <begin position="131"/>
        <end position="132"/>
    </location>
    <ligand>
        <name>S-adenosyl-L-methionine</name>
        <dbReference type="ChEBI" id="CHEBI:59789"/>
    </ligand>
</feature>
<feature type="binding site" evidence="1">
    <location>
        <begin position="151"/>
        <end position="154"/>
    </location>
    <ligand>
        <name>S-adenosyl-L-methionine</name>
        <dbReference type="ChEBI" id="CHEBI:59789"/>
    </ligand>
</feature>
<organism>
    <name type="scientific">Methanococcus aeolicus (strain ATCC BAA-1280 / DSM 17508 / OCM 812 / Nankai-3)</name>
    <dbReference type="NCBI Taxonomy" id="419665"/>
    <lineage>
        <taxon>Archaea</taxon>
        <taxon>Methanobacteriati</taxon>
        <taxon>Methanobacteriota</taxon>
        <taxon>Methanomada group</taxon>
        <taxon>Methanococci</taxon>
        <taxon>Methanococcales</taxon>
        <taxon>Methanococcaceae</taxon>
        <taxon>Methanococcus</taxon>
    </lineage>
</organism>
<gene>
    <name evidence="1" type="primary">flpA</name>
    <name type="ordered locus">Maeo_0761</name>
</gene>
<reference key="1">
    <citation type="submission" date="2007-06" db="EMBL/GenBank/DDBJ databases">
        <title>Complete sequence of Methanococcus aeolicus Nankai-3.</title>
        <authorList>
            <consortium name="US DOE Joint Genome Institute"/>
            <person name="Copeland A."/>
            <person name="Lucas S."/>
            <person name="Lapidus A."/>
            <person name="Barry K."/>
            <person name="Glavina del Rio T."/>
            <person name="Dalin E."/>
            <person name="Tice H."/>
            <person name="Pitluck S."/>
            <person name="Chain P."/>
            <person name="Malfatti S."/>
            <person name="Shin M."/>
            <person name="Vergez L."/>
            <person name="Schmutz J."/>
            <person name="Larimer F."/>
            <person name="Land M."/>
            <person name="Hauser L."/>
            <person name="Kyrpides N."/>
            <person name="Lykidis A."/>
            <person name="Sieprawska-Lupa M."/>
            <person name="Whitman W.B."/>
            <person name="Richardson P."/>
        </authorList>
    </citation>
    <scope>NUCLEOTIDE SEQUENCE [LARGE SCALE GENOMIC DNA]</scope>
    <source>
        <strain>ATCC BAA-1280 / DSM 17508 / OCM 812 / Nankai-3</strain>
    </source>
</reference>
<comment type="function">
    <text evidence="1">Involved in pre-rRNA and tRNA processing. Utilizes the methyl donor S-adenosyl-L-methionine to catalyze the site-specific 2'-hydroxyl methylation of ribose moieties in rRNA and tRNA. Site specificity is provided by a guide RNA that base pairs with the substrate. Methylation occurs at a characteristic distance from the sequence involved in base pairing with the guide RNA.</text>
</comment>
<comment type="subunit">
    <text evidence="1">Interacts with nop5. Component of box C/D small ribonucleoprotein (sRNP) particles that contain rpl7ae, FlpA and nop5, plus a guide RNA.</text>
</comment>
<comment type="similarity">
    <text evidence="1">Belongs to the methyltransferase superfamily. Fibrillarin family.</text>
</comment>
<dbReference type="EC" id="2.1.1.-" evidence="1"/>
<dbReference type="EMBL" id="CP000743">
    <property type="protein sequence ID" value="ABR56344.1"/>
    <property type="molecule type" value="Genomic_DNA"/>
</dbReference>
<dbReference type="RefSeq" id="WP_011973476.1">
    <property type="nucleotide sequence ID" value="NC_009635.1"/>
</dbReference>
<dbReference type="SMR" id="A6UV22"/>
<dbReference type="STRING" id="419665.Maeo_0761"/>
<dbReference type="GeneID" id="5326418"/>
<dbReference type="KEGG" id="mae:Maeo_0761"/>
<dbReference type="eggNOG" id="arCOG00078">
    <property type="taxonomic scope" value="Archaea"/>
</dbReference>
<dbReference type="HOGENOM" id="CLU_059055_2_0_2"/>
<dbReference type="OrthoDB" id="6244at2157"/>
<dbReference type="Proteomes" id="UP000001106">
    <property type="component" value="Chromosome"/>
</dbReference>
<dbReference type="GO" id="GO:1990259">
    <property type="term" value="F:histone H2AQ104 methyltransferase activity"/>
    <property type="evidence" value="ECO:0007669"/>
    <property type="project" value="TreeGrafter"/>
</dbReference>
<dbReference type="GO" id="GO:0003723">
    <property type="term" value="F:RNA binding"/>
    <property type="evidence" value="ECO:0007669"/>
    <property type="project" value="UniProtKB-UniRule"/>
</dbReference>
<dbReference type="GO" id="GO:0008649">
    <property type="term" value="F:rRNA methyltransferase activity"/>
    <property type="evidence" value="ECO:0007669"/>
    <property type="project" value="TreeGrafter"/>
</dbReference>
<dbReference type="GO" id="GO:0000494">
    <property type="term" value="P:box C/D sno(s)RNA 3'-end processing"/>
    <property type="evidence" value="ECO:0007669"/>
    <property type="project" value="TreeGrafter"/>
</dbReference>
<dbReference type="GO" id="GO:0008033">
    <property type="term" value="P:tRNA processing"/>
    <property type="evidence" value="ECO:0007669"/>
    <property type="project" value="UniProtKB-UniRule"/>
</dbReference>
<dbReference type="Gene3D" id="3.30.200.20">
    <property type="entry name" value="Phosphorylase Kinase, domain 1"/>
    <property type="match status" value="1"/>
</dbReference>
<dbReference type="Gene3D" id="3.40.50.150">
    <property type="entry name" value="Vaccinia Virus protein VP39"/>
    <property type="match status" value="1"/>
</dbReference>
<dbReference type="HAMAP" id="MF_00351">
    <property type="entry name" value="RNA_methyltransf_FlpA"/>
    <property type="match status" value="1"/>
</dbReference>
<dbReference type="InterPro" id="IPR000692">
    <property type="entry name" value="Fibrillarin"/>
</dbReference>
<dbReference type="InterPro" id="IPR020813">
    <property type="entry name" value="Fibrillarin_CS"/>
</dbReference>
<dbReference type="InterPro" id="IPR029063">
    <property type="entry name" value="SAM-dependent_MTases_sf"/>
</dbReference>
<dbReference type="NCBIfam" id="NF003276">
    <property type="entry name" value="PRK04266.1-2"/>
    <property type="match status" value="1"/>
</dbReference>
<dbReference type="NCBIfam" id="NF003277">
    <property type="entry name" value="PRK04266.1-3"/>
    <property type="match status" value="1"/>
</dbReference>
<dbReference type="NCBIfam" id="NF003279">
    <property type="entry name" value="PRK04266.1-5"/>
    <property type="match status" value="1"/>
</dbReference>
<dbReference type="PANTHER" id="PTHR10335:SF17">
    <property type="entry name" value="FIBRILLARIN"/>
    <property type="match status" value="1"/>
</dbReference>
<dbReference type="PANTHER" id="PTHR10335">
    <property type="entry name" value="RRNA 2-O-METHYLTRANSFERASE FIBRILLARIN"/>
    <property type="match status" value="1"/>
</dbReference>
<dbReference type="Pfam" id="PF01269">
    <property type="entry name" value="Fibrillarin"/>
    <property type="match status" value="1"/>
</dbReference>
<dbReference type="PIRSF" id="PIRSF006540">
    <property type="entry name" value="Nop17p"/>
    <property type="match status" value="1"/>
</dbReference>
<dbReference type="PRINTS" id="PR00052">
    <property type="entry name" value="FIBRILLARIN"/>
</dbReference>
<dbReference type="SMART" id="SM01206">
    <property type="entry name" value="Fibrillarin"/>
    <property type="match status" value="1"/>
</dbReference>
<dbReference type="SUPFAM" id="SSF53335">
    <property type="entry name" value="S-adenosyl-L-methionine-dependent methyltransferases"/>
    <property type="match status" value="1"/>
</dbReference>
<dbReference type="PROSITE" id="PS00566">
    <property type="entry name" value="FIBRILLARIN"/>
    <property type="match status" value="1"/>
</dbReference>
<sequence>MEKVKLKEIFNNIYELKSDDGLKRIATKSLVPSKRIYGEKLITGEDNLEYRIWNPNRSKLGAAIVNGLKTMPIKKGSKVLYLGVSAGTTPSHVADITENSPVYSVEFAPRIMREFLDVSKDRKNLIPILGDATNPVEYSNVVEEVDVIFEDVAQPKQAEILVNNAKWFLKEGGYGMISIKARSVDVLRNPKEIFEEQKQILIEGGFEIVDEVNIEPFEKDHILFVGIWNKQ</sequence>
<proteinExistence type="inferred from homology"/>